<name>ARFC_MYCTU</name>
<reference key="1">
    <citation type="journal article" date="1998" name="Nature">
        <title>Deciphering the biology of Mycobacterium tuberculosis from the complete genome sequence.</title>
        <authorList>
            <person name="Cole S.T."/>
            <person name="Brosch R."/>
            <person name="Parkhill J."/>
            <person name="Garnier T."/>
            <person name="Churcher C.M."/>
            <person name="Harris D.E."/>
            <person name="Gordon S.V."/>
            <person name="Eiglmeier K."/>
            <person name="Gas S."/>
            <person name="Barry C.E. III"/>
            <person name="Tekaia F."/>
            <person name="Badcock K."/>
            <person name="Basham D."/>
            <person name="Brown D."/>
            <person name="Chillingworth T."/>
            <person name="Connor R."/>
            <person name="Davies R.M."/>
            <person name="Devlin K."/>
            <person name="Feltwell T."/>
            <person name="Gentles S."/>
            <person name="Hamlin N."/>
            <person name="Holroyd S."/>
            <person name="Hornsby T."/>
            <person name="Jagels K."/>
            <person name="Krogh A."/>
            <person name="McLean J."/>
            <person name="Moule S."/>
            <person name="Murphy L.D."/>
            <person name="Oliver S."/>
            <person name="Osborne J."/>
            <person name="Quail M.A."/>
            <person name="Rajandream M.A."/>
            <person name="Rogers J."/>
            <person name="Rutter S."/>
            <person name="Seeger K."/>
            <person name="Skelton S."/>
            <person name="Squares S."/>
            <person name="Squares R."/>
            <person name="Sulston J.E."/>
            <person name="Taylor K."/>
            <person name="Whitehead S."/>
            <person name="Barrell B.G."/>
        </authorList>
    </citation>
    <scope>NUCLEOTIDE SEQUENCE [LARGE SCALE GENOMIC DNA]</scope>
    <source>
        <strain>ATCC 25618 / H37Rv</strain>
    </source>
</reference>
<reference key="2">
    <citation type="journal article" date="2009" name="Jpn. J. Infect. Dis.">
        <title>Rv0901 from Mycobacterium tuberculosis, a possible novel virulent gene proved through the recombinant Mycobacterium smegmatis.</title>
        <authorList>
            <person name="Zhang L."/>
            <person name="Zhong Q."/>
            <person name="Bao L."/>
            <person name="Zhang Y."/>
            <person name="Gao L."/>
            <person name="Huang B."/>
            <person name="Zhang H.D."/>
        </authorList>
    </citation>
    <scope>FUNCTION</scope>
    <scope>EXPRESSION IN M.SMEGMATIS</scope>
    <source>
        <strain>H37Rv</strain>
    </source>
</reference>
<reference key="3">
    <citation type="journal article" date="2011" name="Mol. Cell. Proteomics">
        <title>Proteogenomic analysis of Mycobacterium tuberculosis by high resolution mass spectrometry.</title>
        <authorList>
            <person name="Kelkar D.S."/>
            <person name="Kumar D."/>
            <person name="Kumar P."/>
            <person name="Balakrishnan L."/>
            <person name="Muthusamy B."/>
            <person name="Yadav A.K."/>
            <person name="Shrivastava P."/>
            <person name="Marimuthu A."/>
            <person name="Anand S."/>
            <person name="Sundaram H."/>
            <person name="Kingsbury R."/>
            <person name="Harsha H.C."/>
            <person name="Nair B."/>
            <person name="Prasad T.S."/>
            <person name="Chauhan D.S."/>
            <person name="Katoch K."/>
            <person name="Katoch V.M."/>
            <person name="Kumar P."/>
            <person name="Chaerkady R."/>
            <person name="Ramachandran S."/>
            <person name="Dash D."/>
            <person name="Pandey A."/>
        </authorList>
    </citation>
    <scope>IDENTIFICATION BY MASS SPECTROMETRY [LARGE SCALE ANALYSIS]</scope>
    <source>
        <strain>ATCC 25618 / H37Rv</strain>
    </source>
</reference>
<reference key="4">
    <citation type="journal article" date="2011" name="Mol. Microbiol.">
        <title>Expression of the ompATb operon accelerates ammonia secretion and adaptation of Mycobacterium tuberculosis to acidic environments.</title>
        <authorList>
            <person name="Song H."/>
            <person name="Huff J."/>
            <person name="Janik K."/>
            <person name="Walter K."/>
            <person name="Keller C."/>
            <person name="Ehlers S."/>
            <person name="Bossmann S.H."/>
            <person name="Niederweis M."/>
        </authorList>
    </citation>
    <scope>FUNCTION</scope>
    <scope>INDUCTION</scope>
    <scope>DISRUPTION PHENOTYPE</scope>
    <source>
        <strain>ATCC 25618 / H37Rv</strain>
    </source>
</reference>
<sequence>MEHVHWWLAGLAFTLGMVLTSTLMVRPVEHQVLVKKSVRGSSAKSKPPTARKPAVKSGTKREESPTAKTKVATESAAEQIPVAGEPAAEPIPVAGEPAARIPVVPYAPYGPGSARAGADGSGPQGWLVKGRSDTRLYYTPEDPTYDPTVAQVWFQDEESAARAFFTPWRKSTRRT</sequence>
<protein>
    <recommendedName>
        <fullName>Uncharacterized membrane protein ArfC</fullName>
    </recommendedName>
</protein>
<feature type="chain" id="PRO_0000103741" description="Uncharacterized membrane protein ArfC">
    <location>
        <begin position="1"/>
        <end position="175"/>
    </location>
</feature>
<feature type="transmembrane region" description="Helical" evidence="2">
    <location>
        <begin position="4"/>
        <end position="26"/>
    </location>
</feature>
<feature type="region of interest" description="Disordered" evidence="3">
    <location>
        <begin position="36"/>
        <end position="93"/>
    </location>
</feature>
<dbReference type="EMBL" id="AL123456">
    <property type="protein sequence ID" value="CCP43649.1"/>
    <property type="molecule type" value="Genomic_DNA"/>
</dbReference>
<dbReference type="PIR" id="B70783">
    <property type="entry name" value="B70783"/>
</dbReference>
<dbReference type="RefSeq" id="NP_215416.1">
    <property type="nucleotide sequence ID" value="NC_000962.3"/>
</dbReference>
<dbReference type="RefSeq" id="WP_003404688.1">
    <property type="nucleotide sequence ID" value="NZ_NVQJ01000001.1"/>
</dbReference>
<dbReference type="SMR" id="P9WJG5"/>
<dbReference type="STRING" id="83332.Rv0901"/>
<dbReference type="PaxDb" id="83332-Rv0901"/>
<dbReference type="DNASU" id="885203"/>
<dbReference type="GeneID" id="885203"/>
<dbReference type="KEGG" id="mtu:Rv0901"/>
<dbReference type="KEGG" id="mtv:RVBD_0901"/>
<dbReference type="TubercuList" id="Rv0901"/>
<dbReference type="eggNOG" id="COG0088">
    <property type="taxonomic scope" value="Bacteria"/>
</dbReference>
<dbReference type="InParanoid" id="P9WJG5"/>
<dbReference type="OrthoDB" id="4871889at2"/>
<dbReference type="Proteomes" id="UP000001584">
    <property type="component" value="Chromosome"/>
</dbReference>
<dbReference type="GO" id="GO:0009274">
    <property type="term" value="C:peptidoglycan-based cell wall"/>
    <property type="evidence" value="ECO:0007005"/>
    <property type="project" value="MTBBASE"/>
</dbReference>
<dbReference type="GO" id="GO:0005886">
    <property type="term" value="C:plasma membrane"/>
    <property type="evidence" value="ECO:0007005"/>
    <property type="project" value="MTBBASE"/>
</dbReference>
<accession>P9WJG5</accession>
<accession>L0T6R9</accession>
<accession>P64757</accession>
<accession>Q10559</accession>
<keyword id="KW-1003">Cell membrane</keyword>
<keyword id="KW-0472">Membrane</keyword>
<keyword id="KW-1185">Reference proteome</keyword>
<keyword id="KW-0812">Transmembrane</keyword>
<keyword id="KW-1133">Transmembrane helix</keyword>
<comment type="function">
    <text evidence="4 5">Required for wild-type expression of ArfA and ammonia secretion, not however part of an ammonia transporter (PubMed:21410778). Is highly immunogenic and may play a role in virulence (PubMed:19168955).</text>
</comment>
<comment type="subcellular location">
    <subcellularLocation>
        <location evidence="1">Cell membrane</location>
        <topology evidence="2">Single-pass membrane protein</topology>
    </subcellularLocation>
</comment>
<comment type="induction">
    <text evidence="5">Part of the arfA-arfB-arfC operon. Maximal expression of ArfA requires the full operon.</text>
</comment>
<comment type="disruption phenotype">
    <text evidence="5">Upon operon disruption no reduction of serine uptake at pH 6.9, no visible effect on outer membrane permeability, however severe delays in ammonia secretion, medium pH neutralization and growth also occur at pH 5.5.</text>
</comment>
<comment type="miscellaneous">
    <text evidence="4">Expression in M.smegmatis leads to reduced survival capacity of human macrophage-like THP-1 cells and increase of the release of nitrogen monoxide (NO), and increase of the release of lactate dehydrogenase (LDH) and NO from mouse bone marrow macrophage line ANA-1 cells.</text>
</comment>
<comment type="similarity">
    <text evidence="6">Belongs to the ArfC membrane protein family.</text>
</comment>
<evidence type="ECO:0000250" key="1">
    <source>
        <dbReference type="UniProtKB" id="A1KH33"/>
    </source>
</evidence>
<evidence type="ECO:0000255" key="2"/>
<evidence type="ECO:0000256" key="3">
    <source>
        <dbReference type="SAM" id="MobiDB-lite"/>
    </source>
</evidence>
<evidence type="ECO:0000269" key="4">
    <source>
    </source>
</evidence>
<evidence type="ECO:0000269" key="5">
    <source>
    </source>
</evidence>
<evidence type="ECO:0000305" key="6"/>
<proteinExistence type="evidence at protein level"/>
<gene>
    <name type="primary">arfC</name>
    <name type="ordered locus">Rv0901</name>
    <name type="ORF">MTCY31.29</name>
</gene>
<organism>
    <name type="scientific">Mycobacterium tuberculosis (strain ATCC 25618 / H37Rv)</name>
    <dbReference type="NCBI Taxonomy" id="83332"/>
    <lineage>
        <taxon>Bacteria</taxon>
        <taxon>Bacillati</taxon>
        <taxon>Actinomycetota</taxon>
        <taxon>Actinomycetes</taxon>
        <taxon>Mycobacteriales</taxon>
        <taxon>Mycobacteriaceae</taxon>
        <taxon>Mycobacterium</taxon>
        <taxon>Mycobacterium tuberculosis complex</taxon>
    </lineage>
</organism>